<name>ATPE_SINFN</name>
<sequence length="134" mass="14403">MADSFNFELVSPERLLLSASATEVVIPATEGEMTVMANHAPTMTTVKPGVVTVKTADGKTERFAVFGGFADILPTGCTLLAESAVHVDELDRTVLENRIDEARAELEGAIDEKKTRIEQFIAELTTLGEIVIPA</sequence>
<protein>
    <recommendedName>
        <fullName evidence="1">ATP synthase epsilon chain</fullName>
    </recommendedName>
    <alternativeName>
        <fullName evidence="1">ATP synthase F1 sector epsilon subunit</fullName>
    </alternativeName>
    <alternativeName>
        <fullName evidence="1">F-ATPase epsilon subunit</fullName>
    </alternativeName>
</protein>
<evidence type="ECO:0000255" key="1">
    <source>
        <dbReference type="HAMAP-Rule" id="MF_00530"/>
    </source>
</evidence>
<gene>
    <name evidence="1" type="primary">atpC</name>
    <name type="ordered locus">NGR_c31100</name>
</gene>
<accession>C3M9S0</accession>
<keyword id="KW-0066">ATP synthesis</keyword>
<keyword id="KW-0997">Cell inner membrane</keyword>
<keyword id="KW-1003">Cell membrane</keyword>
<keyword id="KW-0139">CF(1)</keyword>
<keyword id="KW-0375">Hydrogen ion transport</keyword>
<keyword id="KW-0406">Ion transport</keyword>
<keyword id="KW-0472">Membrane</keyword>
<keyword id="KW-1185">Reference proteome</keyword>
<keyword id="KW-0813">Transport</keyword>
<comment type="function">
    <text evidence="1">Produces ATP from ADP in the presence of a proton gradient across the membrane.</text>
</comment>
<comment type="subunit">
    <text evidence="1">F-type ATPases have 2 components, CF(1) - the catalytic core - and CF(0) - the membrane proton channel. CF(1) has five subunits: alpha(3), beta(3), gamma(1), delta(1), epsilon(1). CF(0) has three main subunits: a, b and c.</text>
</comment>
<comment type="subcellular location">
    <subcellularLocation>
        <location evidence="1">Cell inner membrane</location>
        <topology evidence="1">Peripheral membrane protein</topology>
    </subcellularLocation>
</comment>
<comment type="similarity">
    <text evidence="1">Belongs to the ATPase epsilon chain family.</text>
</comment>
<feature type="chain" id="PRO_1000146342" description="ATP synthase epsilon chain">
    <location>
        <begin position="1"/>
        <end position="134"/>
    </location>
</feature>
<proteinExistence type="inferred from homology"/>
<organism>
    <name type="scientific">Sinorhizobium fredii (strain NBRC 101917 / NGR234)</name>
    <dbReference type="NCBI Taxonomy" id="394"/>
    <lineage>
        <taxon>Bacteria</taxon>
        <taxon>Pseudomonadati</taxon>
        <taxon>Pseudomonadota</taxon>
        <taxon>Alphaproteobacteria</taxon>
        <taxon>Hyphomicrobiales</taxon>
        <taxon>Rhizobiaceae</taxon>
        <taxon>Sinorhizobium/Ensifer group</taxon>
        <taxon>Sinorhizobium</taxon>
    </lineage>
</organism>
<reference key="1">
    <citation type="journal article" date="2009" name="Appl. Environ. Microbiol.">
        <title>Rhizobium sp. strain NGR234 possesses a remarkable number of secretion systems.</title>
        <authorList>
            <person name="Schmeisser C."/>
            <person name="Liesegang H."/>
            <person name="Krysciak D."/>
            <person name="Bakkou N."/>
            <person name="Le Quere A."/>
            <person name="Wollherr A."/>
            <person name="Heinemeyer I."/>
            <person name="Morgenstern B."/>
            <person name="Pommerening-Roeser A."/>
            <person name="Flores M."/>
            <person name="Palacios R."/>
            <person name="Brenner S."/>
            <person name="Gottschalk G."/>
            <person name="Schmitz R.A."/>
            <person name="Broughton W.J."/>
            <person name="Perret X."/>
            <person name="Strittmatter A.W."/>
            <person name="Streit W.R."/>
        </authorList>
    </citation>
    <scope>NUCLEOTIDE SEQUENCE [LARGE SCALE GENOMIC DNA]</scope>
    <source>
        <strain>NBRC 101917 / NGR234</strain>
    </source>
</reference>
<dbReference type="EMBL" id="CP001389">
    <property type="protein sequence ID" value="ACP26845.1"/>
    <property type="molecule type" value="Genomic_DNA"/>
</dbReference>
<dbReference type="RefSeq" id="WP_012709597.1">
    <property type="nucleotide sequence ID" value="NC_012587.1"/>
</dbReference>
<dbReference type="RefSeq" id="YP_002827598.1">
    <property type="nucleotide sequence ID" value="NC_012587.1"/>
</dbReference>
<dbReference type="SMR" id="C3M9S0"/>
<dbReference type="STRING" id="394.NGR_c31100"/>
<dbReference type="KEGG" id="rhi:NGR_c31100"/>
<dbReference type="PATRIC" id="fig|394.7.peg.5948"/>
<dbReference type="eggNOG" id="COG0355">
    <property type="taxonomic scope" value="Bacteria"/>
</dbReference>
<dbReference type="HOGENOM" id="CLU_084338_2_1_5"/>
<dbReference type="OrthoDB" id="9799969at2"/>
<dbReference type="Proteomes" id="UP000001054">
    <property type="component" value="Chromosome"/>
</dbReference>
<dbReference type="GO" id="GO:0005886">
    <property type="term" value="C:plasma membrane"/>
    <property type="evidence" value="ECO:0007669"/>
    <property type="project" value="UniProtKB-SubCell"/>
</dbReference>
<dbReference type="GO" id="GO:0045259">
    <property type="term" value="C:proton-transporting ATP synthase complex"/>
    <property type="evidence" value="ECO:0007669"/>
    <property type="project" value="UniProtKB-KW"/>
</dbReference>
<dbReference type="GO" id="GO:0005524">
    <property type="term" value="F:ATP binding"/>
    <property type="evidence" value="ECO:0007669"/>
    <property type="project" value="UniProtKB-UniRule"/>
</dbReference>
<dbReference type="GO" id="GO:0046933">
    <property type="term" value="F:proton-transporting ATP synthase activity, rotational mechanism"/>
    <property type="evidence" value="ECO:0007669"/>
    <property type="project" value="UniProtKB-UniRule"/>
</dbReference>
<dbReference type="CDD" id="cd12152">
    <property type="entry name" value="F1-ATPase_delta"/>
    <property type="match status" value="1"/>
</dbReference>
<dbReference type="Gene3D" id="2.60.15.10">
    <property type="entry name" value="F0F1 ATP synthase delta/epsilon subunit, N-terminal"/>
    <property type="match status" value="1"/>
</dbReference>
<dbReference type="HAMAP" id="MF_00530">
    <property type="entry name" value="ATP_synth_epsil_bac"/>
    <property type="match status" value="1"/>
</dbReference>
<dbReference type="InterPro" id="IPR001469">
    <property type="entry name" value="ATP_synth_F1_dsu/esu"/>
</dbReference>
<dbReference type="InterPro" id="IPR020546">
    <property type="entry name" value="ATP_synth_F1_dsu/esu_N"/>
</dbReference>
<dbReference type="InterPro" id="IPR036771">
    <property type="entry name" value="ATPsynth_dsu/esu_N"/>
</dbReference>
<dbReference type="NCBIfam" id="TIGR01216">
    <property type="entry name" value="ATP_synt_epsi"/>
    <property type="match status" value="1"/>
</dbReference>
<dbReference type="NCBIfam" id="NF001851">
    <property type="entry name" value="PRK00571.2-4"/>
    <property type="match status" value="1"/>
</dbReference>
<dbReference type="PANTHER" id="PTHR13822">
    <property type="entry name" value="ATP SYNTHASE DELTA/EPSILON CHAIN"/>
    <property type="match status" value="1"/>
</dbReference>
<dbReference type="PANTHER" id="PTHR13822:SF10">
    <property type="entry name" value="ATP SYNTHASE EPSILON CHAIN, CHLOROPLASTIC"/>
    <property type="match status" value="1"/>
</dbReference>
<dbReference type="Pfam" id="PF02823">
    <property type="entry name" value="ATP-synt_DE_N"/>
    <property type="match status" value="1"/>
</dbReference>
<dbReference type="SUPFAM" id="SSF51344">
    <property type="entry name" value="Epsilon subunit of F1F0-ATP synthase N-terminal domain"/>
    <property type="match status" value="1"/>
</dbReference>